<organism>
    <name type="scientific">Cellvibrio japonicus (strain Ueda107)</name>
    <name type="common">Pseudomonas fluorescens subsp. cellulosa</name>
    <dbReference type="NCBI Taxonomy" id="498211"/>
    <lineage>
        <taxon>Bacteria</taxon>
        <taxon>Pseudomonadati</taxon>
        <taxon>Pseudomonadota</taxon>
        <taxon>Gammaproteobacteria</taxon>
        <taxon>Cellvibrionales</taxon>
        <taxon>Cellvibrionaceae</taxon>
        <taxon>Cellvibrio</taxon>
    </lineage>
</organism>
<dbReference type="EC" id="5.1.1.7" evidence="1"/>
<dbReference type="EMBL" id="CP000934">
    <property type="protein sequence ID" value="ACE83855.1"/>
    <property type="molecule type" value="Genomic_DNA"/>
</dbReference>
<dbReference type="RefSeq" id="WP_012488866.1">
    <property type="nucleotide sequence ID" value="NC_010995.1"/>
</dbReference>
<dbReference type="SMR" id="B3PEI8"/>
<dbReference type="STRING" id="498211.CJA_3290"/>
<dbReference type="KEGG" id="cja:CJA_3290"/>
<dbReference type="eggNOG" id="COG0253">
    <property type="taxonomic scope" value="Bacteria"/>
</dbReference>
<dbReference type="HOGENOM" id="CLU_053306_1_1_6"/>
<dbReference type="OrthoDB" id="9805408at2"/>
<dbReference type="UniPathway" id="UPA00034">
    <property type="reaction ID" value="UER00025"/>
</dbReference>
<dbReference type="Proteomes" id="UP000001036">
    <property type="component" value="Chromosome"/>
</dbReference>
<dbReference type="GO" id="GO:0005829">
    <property type="term" value="C:cytosol"/>
    <property type="evidence" value="ECO:0007669"/>
    <property type="project" value="TreeGrafter"/>
</dbReference>
<dbReference type="GO" id="GO:0008837">
    <property type="term" value="F:diaminopimelate epimerase activity"/>
    <property type="evidence" value="ECO:0007669"/>
    <property type="project" value="UniProtKB-UniRule"/>
</dbReference>
<dbReference type="GO" id="GO:0009089">
    <property type="term" value="P:lysine biosynthetic process via diaminopimelate"/>
    <property type="evidence" value="ECO:0007669"/>
    <property type="project" value="UniProtKB-UniRule"/>
</dbReference>
<dbReference type="FunFam" id="3.10.310.10:FF:000001">
    <property type="entry name" value="Diaminopimelate epimerase"/>
    <property type="match status" value="1"/>
</dbReference>
<dbReference type="Gene3D" id="3.10.310.10">
    <property type="entry name" value="Diaminopimelate Epimerase, Chain A, domain 1"/>
    <property type="match status" value="2"/>
</dbReference>
<dbReference type="HAMAP" id="MF_00197">
    <property type="entry name" value="DAP_epimerase"/>
    <property type="match status" value="1"/>
</dbReference>
<dbReference type="InterPro" id="IPR018510">
    <property type="entry name" value="DAP_epimerase_AS"/>
</dbReference>
<dbReference type="InterPro" id="IPR001653">
    <property type="entry name" value="DAP_epimerase_DapF"/>
</dbReference>
<dbReference type="NCBIfam" id="TIGR00652">
    <property type="entry name" value="DapF"/>
    <property type="match status" value="1"/>
</dbReference>
<dbReference type="PANTHER" id="PTHR31689:SF0">
    <property type="entry name" value="DIAMINOPIMELATE EPIMERASE"/>
    <property type="match status" value="1"/>
</dbReference>
<dbReference type="PANTHER" id="PTHR31689">
    <property type="entry name" value="DIAMINOPIMELATE EPIMERASE, CHLOROPLASTIC"/>
    <property type="match status" value="1"/>
</dbReference>
<dbReference type="Pfam" id="PF01678">
    <property type="entry name" value="DAP_epimerase"/>
    <property type="match status" value="2"/>
</dbReference>
<dbReference type="SUPFAM" id="SSF54506">
    <property type="entry name" value="Diaminopimelate epimerase-like"/>
    <property type="match status" value="1"/>
</dbReference>
<dbReference type="PROSITE" id="PS01326">
    <property type="entry name" value="DAP_EPIMERASE"/>
    <property type="match status" value="1"/>
</dbReference>
<protein>
    <recommendedName>
        <fullName evidence="1">Diaminopimelate epimerase</fullName>
        <shortName evidence="1">DAP epimerase</shortName>
        <ecNumber evidence="1">5.1.1.7</ecNumber>
    </recommendedName>
    <alternativeName>
        <fullName evidence="1">PLP-independent amino acid racemase</fullName>
    </alternativeName>
</protein>
<proteinExistence type="inferred from homology"/>
<name>DAPF_CELJU</name>
<feature type="chain" id="PRO_1000099225" description="Diaminopimelate epimerase">
    <location>
        <begin position="1"/>
        <end position="276"/>
    </location>
</feature>
<feature type="active site" description="Proton donor" evidence="1">
    <location>
        <position position="75"/>
    </location>
</feature>
<feature type="active site" description="Proton acceptor" evidence="1">
    <location>
        <position position="219"/>
    </location>
</feature>
<feature type="binding site" evidence="1">
    <location>
        <position position="13"/>
    </location>
    <ligand>
        <name>substrate</name>
    </ligand>
</feature>
<feature type="binding site" evidence="1">
    <location>
        <position position="46"/>
    </location>
    <ligand>
        <name>substrate</name>
    </ligand>
</feature>
<feature type="binding site" evidence="1">
    <location>
        <position position="66"/>
    </location>
    <ligand>
        <name>substrate</name>
    </ligand>
</feature>
<feature type="binding site" evidence="1">
    <location>
        <begin position="76"/>
        <end position="77"/>
    </location>
    <ligand>
        <name>substrate</name>
    </ligand>
</feature>
<feature type="binding site" evidence="1">
    <location>
        <position position="159"/>
    </location>
    <ligand>
        <name>substrate</name>
    </ligand>
</feature>
<feature type="binding site" evidence="1">
    <location>
        <position position="192"/>
    </location>
    <ligand>
        <name>substrate</name>
    </ligand>
</feature>
<feature type="binding site" evidence="1">
    <location>
        <begin position="210"/>
        <end position="211"/>
    </location>
    <ligand>
        <name>substrate</name>
    </ligand>
</feature>
<feature type="binding site" evidence="1">
    <location>
        <begin position="220"/>
        <end position="221"/>
    </location>
    <ligand>
        <name>substrate</name>
    </ligand>
</feature>
<feature type="site" description="Could be important to modulate the pK values of the two catalytic cysteine residues" evidence="1">
    <location>
        <position position="161"/>
    </location>
</feature>
<feature type="site" description="Could be important to modulate the pK values of the two catalytic cysteine residues" evidence="1">
    <location>
        <position position="210"/>
    </location>
</feature>
<feature type="site" description="Important for dimerization" evidence="1">
    <location>
        <position position="270"/>
    </location>
</feature>
<sequence length="276" mass="29993">MRIRFSKMHGLGNDFVVIDGISQTVRLTPEKIRKLADRHFGVGCDQVLLVEIPEQPNVDFRYRIFNCDGSEVENCGNGARCFAVFVRERRLTGKRVIRVETAGGIIELRVQDDEQVSVDMGVPRLLPEKIPFVADQQAVTYPLDVAGQVCSISAVSMGNPHAVMLVDDVKSAPVGQLGPLVENHPRFPARVNAGFLQVVSRDEINLRVYERGAGETLACGTGACAAVVTGRLRGLLNDTVKVNLPGGSLRISWPGEGHSVIMTGPAVTVFHGQIKL</sequence>
<keyword id="KW-0028">Amino-acid biosynthesis</keyword>
<keyword id="KW-0963">Cytoplasm</keyword>
<keyword id="KW-0413">Isomerase</keyword>
<keyword id="KW-0457">Lysine biosynthesis</keyword>
<keyword id="KW-1185">Reference proteome</keyword>
<accession>B3PEI8</accession>
<evidence type="ECO:0000255" key="1">
    <source>
        <dbReference type="HAMAP-Rule" id="MF_00197"/>
    </source>
</evidence>
<reference key="1">
    <citation type="journal article" date="2008" name="J. Bacteriol.">
        <title>Insights into plant cell wall degradation from the genome sequence of the soil bacterium Cellvibrio japonicus.</title>
        <authorList>
            <person name="DeBoy R.T."/>
            <person name="Mongodin E.F."/>
            <person name="Fouts D.E."/>
            <person name="Tailford L.E."/>
            <person name="Khouri H."/>
            <person name="Emerson J.B."/>
            <person name="Mohamoud Y."/>
            <person name="Watkins K."/>
            <person name="Henrissat B."/>
            <person name="Gilbert H.J."/>
            <person name="Nelson K.E."/>
        </authorList>
    </citation>
    <scope>NUCLEOTIDE SEQUENCE [LARGE SCALE GENOMIC DNA]</scope>
    <source>
        <strain>Ueda107</strain>
    </source>
</reference>
<comment type="function">
    <text evidence="1">Catalyzes the stereoinversion of LL-2,6-diaminopimelate (L,L-DAP) to meso-diaminopimelate (meso-DAP), a precursor of L-lysine and an essential component of the bacterial peptidoglycan.</text>
</comment>
<comment type="catalytic activity">
    <reaction evidence="1">
        <text>(2S,6S)-2,6-diaminopimelate = meso-2,6-diaminopimelate</text>
        <dbReference type="Rhea" id="RHEA:15393"/>
        <dbReference type="ChEBI" id="CHEBI:57609"/>
        <dbReference type="ChEBI" id="CHEBI:57791"/>
        <dbReference type="EC" id="5.1.1.7"/>
    </reaction>
</comment>
<comment type="pathway">
    <text evidence="1">Amino-acid biosynthesis; L-lysine biosynthesis via DAP pathway; DL-2,6-diaminopimelate from LL-2,6-diaminopimelate: step 1/1.</text>
</comment>
<comment type="subunit">
    <text evidence="1">Homodimer.</text>
</comment>
<comment type="subcellular location">
    <subcellularLocation>
        <location evidence="1">Cytoplasm</location>
    </subcellularLocation>
</comment>
<comment type="similarity">
    <text evidence="1">Belongs to the diaminopimelate epimerase family.</text>
</comment>
<gene>
    <name evidence="1" type="primary">dapF</name>
    <name type="ordered locus">CJA_3290</name>
</gene>